<dbReference type="EMBL" id="AP009484">
    <property type="protein sequence ID" value="BAH17851.1"/>
    <property type="molecule type" value="Genomic_DNA"/>
</dbReference>
<dbReference type="RefSeq" id="WP_012657049.1">
    <property type="nucleotide sequence ID" value="NC_011999.1"/>
</dbReference>
<dbReference type="SMR" id="B9E6N3"/>
<dbReference type="STRING" id="458233.MCCL_1144"/>
<dbReference type="KEGG" id="mcl:MCCL_1144"/>
<dbReference type="eggNOG" id="COG1354">
    <property type="taxonomic scope" value="Bacteria"/>
</dbReference>
<dbReference type="HOGENOM" id="CLU_038686_3_1_9"/>
<dbReference type="OrthoDB" id="9811016at2"/>
<dbReference type="Proteomes" id="UP000001383">
    <property type="component" value="Chromosome"/>
</dbReference>
<dbReference type="GO" id="GO:0005737">
    <property type="term" value="C:cytoplasm"/>
    <property type="evidence" value="ECO:0007669"/>
    <property type="project" value="UniProtKB-SubCell"/>
</dbReference>
<dbReference type="GO" id="GO:0051301">
    <property type="term" value="P:cell division"/>
    <property type="evidence" value="ECO:0007669"/>
    <property type="project" value="UniProtKB-KW"/>
</dbReference>
<dbReference type="GO" id="GO:0007059">
    <property type="term" value="P:chromosome segregation"/>
    <property type="evidence" value="ECO:0007669"/>
    <property type="project" value="UniProtKB-UniRule"/>
</dbReference>
<dbReference type="GO" id="GO:0006260">
    <property type="term" value="P:DNA replication"/>
    <property type="evidence" value="ECO:0007669"/>
    <property type="project" value="UniProtKB-UniRule"/>
</dbReference>
<dbReference type="Gene3D" id="6.10.250.2410">
    <property type="match status" value="1"/>
</dbReference>
<dbReference type="Gene3D" id="1.10.10.580">
    <property type="entry name" value="Structural maintenance of chromosome 1. Chain E"/>
    <property type="match status" value="1"/>
</dbReference>
<dbReference type="HAMAP" id="MF_01805">
    <property type="entry name" value="ScpA"/>
    <property type="match status" value="1"/>
</dbReference>
<dbReference type="InterPro" id="IPR003768">
    <property type="entry name" value="ScpA"/>
</dbReference>
<dbReference type="InterPro" id="IPR023093">
    <property type="entry name" value="ScpA-like_C"/>
</dbReference>
<dbReference type="PANTHER" id="PTHR33969">
    <property type="entry name" value="SEGREGATION AND CONDENSATION PROTEIN A"/>
    <property type="match status" value="1"/>
</dbReference>
<dbReference type="PANTHER" id="PTHR33969:SF2">
    <property type="entry name" value="SEGREGATION AND CONDENSATION PROTEIN A"/>
    <property type="match status" value="1"/>
</dbReference>
<dbReference type="Pfam" id="PF02616">
    <property type="entry name" value="SMC_ScpA"/>
    <property type="match status" value="1"/>
</dbReference>
<organism>
    <name type="scientific">Macrococcus caseolyticus (strain JCSC5402)</name>
    <name type="common">Macrococcoides caseolyticum</name>
    <dbReference type="NCBI Taxonomy" id="458233"/>
    <lineage>
        <taxon>Bacteria</taxon>
        <taxon>Bacillati</taxon>
        <taxon>Bacillota</taxon>
        <taxon>Bacilli</taxon>
        <taxon>Bacillales</taxon>
        <taxon>Staphylococcaceae</taxon>
        <taxon>Macrococcoides</taxon>
    </lineage>
</organism>
<keyword id="KW-0131">Cell cycle</keyword>
<keyword id="KW-0132">Cell division</keyword>
<keyword id="KW-0159">Chromosome partition</keyword>
<keyword id="KW-0963">Cytoplasm</keyword>
<keyword id="KW-1185">Reference proteome</keyword>
<name>SCPA_MACCJ</name>
<comment type="function">
    <text evidence="1">Participates in chromosomal partition during cell division. May act via the formation of a condensin-like complex containing Smc and ScpB that pull DNA away from mid-cell into both cell halves.</text>
</comment>
<comment type="subunit">
    <text evidence="1">Component of a cohesin-like complex composed of ScpA, ScpB and the Smc homodimer, in which ScpA and ScpB bind to the head domain of Smc. The presence of the three proteins is required for the association of the complex with DNA.</text>
</comment>
<comment type="subcellular location">
    <subcellularLocation>
        <location evidence="1">Cytoplasm</location>
    </subcellularLocation>
    <text evidence="1">Associated with two foci at the outer edges of the nucleoid region in young cells, and at four foci within both cell halves in older cells.</text>
</comment>
<comment type="similarity">
    <text evidence="1">Belongs to the ScpA family.</text>
</comment>
<evidence type="ECO:0000255" key="1">
    <source>
        <dbReference type="HAMAP-Rule" id="MF_01805"/>
    </source>
</evidence>
<proteinExistence type="inferred from homology"/>
<protein>
    <recommendedName>
        <fullName evidence="1">Segregation and condensation protein A</fullName>
    </recommendedName>
</protein>
<reference key="1">
    <citation type="journal article" date="2009" name="J. Bacteriol.">
        <title>Complete genome sequence of Macrococcus caseolyticus strain JCSCS5402, reflecting the ancestral genome of the human-pathogenic staphylococci.</title>
        <authorList>
            <person name="Baba T."/>
            <person name="Kuwahara-Arai K."/>
            <person name="Uchiyama I."/>
            <person name="Takeuchi F."/>
            <person name="Ito T."/>
            <person name="Hiramatsu K."/>
        </authorList>
    </citation>
    <scope>NUCLEOTIDE SEQUENCE [LARGE SCALE GENOMIC DNA]</scope>
    <source>
        <strain>JCSC5402</strain>
    </source>
</reference>
<feature type="chain" id="PRO_1000187565" description="Segregation and condensation protein A">
    <location>
        <begin position="1"/>
        <end position="238"/>
    </location>
</feature>
<accession>B9E6N3</accession>
<sequence length="238" mass="28134">MYEVKLASFHGPLDLLLHLIKQYEIDIYDISMKILTEQYINYIKDVTDLDINVHGDYLVMASELLRIKSRMLLPESTETVEETEDPREGLMNQLIEYQNYRMLAEILNEKKKEEEKYFIKRGNDLSRFEKVDTSLELELVDLITAYYKAKQRQHVVKPTISMARDTYSIEDATKNIIENLQQKQSITFADFVTFSETKTQIVTLFMALLELMKTETVKIRQERTFGDIYIERGRRYNG</sequence>
<gene>
    <name evidence="1" type="primary">scpA</name>
    <name type="ordered locus">MCCL_1144</name>
</gene>